<evidence type="ECO:0000255" key="1">
    <source>
        <dbReference type="HAMAP-Rule" id="MF_00003"/>
    </source>
</evidence>
<sequence>MQFERADRVAEEIKKEISDIIQHELKDPRICAELISIVKVNMSKDLRHAKVFVSIFDKNRENITSTMKALENAKPYIRREISRRINLRFSPEISFELDDSIEYGARISQILNQLNIAKDEEEEKSQDESEGEQEN</sequence>
<comment type="function">
    <text evidence="1">One of several proteins that assist in the late maturation steps of the functional core of the 30S ribosomal subunit. Associates with free 30S ribosomal subunits (but not with 30S subunits that are part of 70S ribosomes or polysomes). Required for efficient processing of 16S rRNA. May interact with the 5'-terminal helix region of 16S rRNA.</text>
</comment>
<comment type="subunit">
    <text evidence="1">Monomer. Binds 30S ribosomal subunits, but not 50S ribosomal subunits or 70S ribosomes.</text>
</comment>
<comment type="subcellular location">
    <subcellularLocation>
        <location evidence="1">Cytoplasm</location>
    </subcellularLocation>
</comment>
<comment type="similarity">
    <text evidence="1">Belongs to the RbfA family.</text>
</comment>
<gene>
    <name evidence="1" type="primary">rbfA</name>
    <name type="ordered locus">Csac_2069</name>
</gene>
<reference key="1">
    <citation type="submission" date="2007-04" db="EMBL/GenBank/DDBJ databases">
        <title>Genome sequence of the thermophilic hydrogen-producing bacterium Caldicellulosiruptor saccharolyticus DSM 8903.</title>
        <authorList>
            <person name="Copeland A."/>
            <person name="Lucas S."/>
            <person name="Lapidus A."/>
            <person name="Barry K."/>
            <person name="Detter J.C."/>
            <person name="Glavina del Rio T."/>
            <person name="Hammon N."/>
            <person name="Israni S."/>
            <person name="Dalin E."/>
            <person name="Tice H."/>
            <person name="Pitluck S."/>
            <person name="Kiss H."/>
            <person name="Brettin T."/>
            <person name="Bruce D."/>
            <person name="Han C."/>
            <person name="Schmutz J."/>
            <person name="Larimer F."/>
            <person name="Land M."/>
            <person name="Hauser L."/>
            <person name="Kyrpides N."/>
            <person name="Lykidis A."/>
            <person name="van de Werken H.J.G."/>
            <person name="Verhaart M.R.A."/>
            <person name="VanFossen A.L."/>
            <person name="Lewis D.L."/>
            <person name="Nichols J.D."/>
            <person name="Goorissen H.P."/>
            <person name="van Niel E.W.J."/>
            <person name="Stams F.J.M."/>
            <person name="Willquist K.U."/>
            <person name="Ward D.E."/>
            <person name="van der Oost J."/>
            <person name="Kelly R.M."/>
            <person name="Kengen S.M.W."/>
            <person name="Richardson P."/>
        </authorList>
    </citation>
    <scope>NUCLEOTIDE SEQUENCE [LARGE SCALE GENOMIC DNA]</scope>
    <source>
        <strain>ATCC 43494 / DSM 8903 / Tp8T 6331</strain>
    </source>
</reference>
<name>RBFA_CALS8</name>
<protein>
    <recommendedName>
        <fullName evidence="1">Ribosome-binding factor A</fullName>
    </recommendedName>
</protein>
<keyword id="KW-0963">Cytoplasm</keyword>
<keyword id="KW-0690">Ribosome biogenesis</keyword>
<proteinExistence type="inferred from homology"/>
<feature type="chain" id="PRO_1000000086" description="Ribosome-binding factor A">
    <location>
        <begin position="1"/>
        <end position="135"/>
    </location>
</feature>
<organism>
    <name type="scientific">Caldicellulosiruptor saccharolyticus (strain ATCC 43494 / DSM 8903 / Tp8T 6331)</name>
    <dbReference type="NCBI Taxonomy" id="351627"/>
    <lineage>
        <taxon>Bacteria</taxon>
        <taxon>Bacillati</taxon>
        <taxon>Bacillota</taxon>
        <taxon>Bacillota incertae sedis</taxon>
        <taxon>Caldicellulosiruptorales</taxon>
        <taxon>Caldicellulosiruptoraceae</taxon>
        <taxon>Caldicellulosiruptor</taxon>
    </lineage>
</organism>
<accession>A4XL69</accession>
<dbReference type="EMBL" id="CP000679">
    <property type="protein sequence ID" value="ABP67654.1"/>
    <property type="molecule type" value="Genomic_DNA"/>
</dbReference>
<dbReference type="RefSeq" id="WP_011917589.1">
    <property type="nucleotide sequence ID" value="NC_009437.1"/>
</dbReference>
<dbReference type="SMR" id="A4XL69"/>
<dbReference type="STRING" id="351627.Csac_2069"/>
<dbReference type="KEGG" id="csc:Csac_2069"/>
<dbReference type="eggNOG" id="COG0858">
    <property type="taxonomic scope" value="Bacteria"/>
</dbReference>
<dbReference type="HOGENOM" id="CLU_089475_6_3_9"/>
<dbReference type="OrthoDB" id="307788at2"/>
<dbReference type="Proteomes" id="UP000000256">
    <property type="component" value="Chromosome"/>
</dbReference>
<dbReference type="GO" id="GO:0005829">
    <property type="term" value="C:cytosol"/>
    <property type="evidence" value="ECO:0007669"/>
    <property type="project" value="TreeGrafter"/>
</dbReference>
<dbReference type="GO" id="GO:0043024">
    <property type="term" value="F:ribosomal small subunit binding"/>
    <property type="evidence" value="ECO:0007669"/>
    <property type="project" value="TreeGrafter"/>
</dbReference>
<dbReference type="GO" id="GO:0030490">
    <property type="term" value="P:maturation of SSU-rRNA"/>
    <property type="evidence" value="ECO:0007669"/>
    <property type="project" value="UniProtKB-UniRule"/>
</dbReference>
<dbReference type="Gene3D" id="3.30.300.20">
    <property type="match status" value="1"/>
</dbReference>
<dbReference type="HAMAP" id="MF_00003">
    <property type="entry name" value="RbfA"/>
    <property type="match status" value="1"/>
</dbReference>
<dbReference type="InterPro" id="IPR015946">
    <property type="entry name" value="KH_dom-like_a/b"/>
</dbReference>
<dbReference type="InterPro" id="IPR000238">
    <property type="entry name" value="RbfA"/>
</dbReference>
<dbReference type="InterPro" id="IPR023799">
    <property type="entry name" value="RbfA_dom_sf"/>
</dbReference>
<dbReference type="InterPro" id="IPR020053">
    <property type="entry name" value="Ribosome-bd_factorA_CS"/>
</dbReference>
<dbReference type="NCBIfam" id="TIGR00082">
    <property type="entry name" value="rbfA"/>
    <property type="match status" value="1"/>
</dbReference>
<dbReference type="PANTHER" id="PTHR33515">
    <property type="entry name" value="RIBOSOME-BINDING FACTOR A, CHLOROPLASTIC-RELATED"/>
    <property type="match status" value="1"/>
</dbReference>
<dbReference type="PANTHER" id="PTHR33515:SF1">
    <property type="entry name" value="RIBOSOME-BINDING FACTOR A, CHLOROPLASTIC-RELATED"/>
    <property type="match status" value="1"/>
</dbReference>
<dbReference type="Pfam" id="PF02033">
    <property type="entry name" value="RBFA"/>
    <property type="match status" value="1"/>
</dbReference>
<dbReference type="SUPFAM" id="SSF89919">
    <property type="entry name" value="Ribosome-binding factor A, RbfA"/>
    <property type="match status" value="1"/>
</dbReference>
<dbReference type="PROSITE" id="PS01319">
    <property type="entry name" value="RBFA"/>
    <property type="match status" value="1"/>
</dbReference>